<protein>
    <recommendedName>
        <fullName evidence="2">Small ribosomal subunit protein uS4</fullName>
    </recommendedName>
    <alternativeName>
        <fullName>40S ribosomal protein S9</fullName>
    </alternativeName>
    <alternativeName>
        <fullName>S4</fullName>
    </alternativeName>
</protein>
<sequence length="77" mass="8557">AKSVHHARVLIRQRHIRVGRQVVNVPSFMVRLDSQKHIDFSLISPFGGGRPGRVKRKNQKAAAKKASGGDGDEEDEE</sequence>
<comment type="similarity">
    <text evidence="2">Belongs to the universal ribosomal protein uS4 family.</text>
</comment>
<name>RS9_TOBAC</name>
<evidence type="ECO:0000256" key="1">
    <source>
        <dbReference type="SAM" id="MobiDB-lite"/>
    </source>
</evidence>
<evidence type="ECO:0000305" key="2"/>
<proteinExistence type="evidence at transcript level"/>
<reference key="1">
    <citation type="journal article" date="1993" name="Plant J.">
        <title>Growth-related gene expression in Nicotiana tabacum mesophyll protoplasts.</title>
        <authorList>
            <person name="Marty I."/>
            <person name="Brugidou C."/>
            <person name="Chartier Y."/>
            <person name="Meyer Y."/>
        </authorList>
    </citation>
    <scope>NUCLEOTIDE SEQUENCE [MRNA]</scope>
    <source>
        <strain>cv. 19</strain>
    </source>
</reference>
<feature type="chain" id="PRO_0000132698" description="Small ribosomal subunit protein uS4">
    <location>
        <begin position="1" status="less than"/>
        <end position="77"/>
    </location>
</feature>
<feature type="region of interest" description="Disordered" evidence="1">
    <location>
        <begin position="45"/>
        <end position="77"/>
    </location>
</feature>
<feature type="compositionally biased region" description="Basic residues" evidence="1">
    <location>
        <begin position="52"/>
        <end position="63"/>
    </location>
</feature>
<feature type="non-terminal residue">
    <location>
        <position position="1"/>
    </location>
</feature>
<keyword id="KW-1185">Reference proteome</keyword>
<keyword id="KW-0687">Ribonucleoprotein</keyword>
<keyword id="KW-0689">Ribosomal protein</keyword>
<organism>
    <name type="scientific">Nicotiana tabacum</name>
    <name type="common">Common tobacco</name>
    <dbReference type="NCBI Taxonomy" id="4097"/>
    <lineage>
        <taxon>Eukaryota</taxon>
        <taxon>Viridiplantae</taxon>
        <taxon>Streptophyta</taxon>
        <taxon>Embryophyta</taxon>
        <taxon>Tracheophyta</taxon>
        <taxon>Spermatophyta</taxon>
        <taxon>Magnoliopsida</taxon>
        <taxon>eudicotyledons</taxon>
        <taxon>Gunneridae</taxon>
        <taxon>Pentapetalae</taxon>
        <taxon>asterids</taxon>
        <taxon>lamiids</taxon>
        <taxon>Solanales</taxon>
        <taxon>Solanaceae</taxon>
        <taxon>Nicotianoideae</taxon>
        <taxon>Nicotianeae</taxon>
        <taxon>Nicotiana</taxon>
    </lineage>
</organism>
<dbReference type="EMBL" id="Z14085">
    <property type="protein sequence ID" value="CAA78463.1"/>
    <property type="molecule type" value="mRNA"/>
</dbReference>
<dbReference type="PIR" id="S45375">
    <property type="entry name" value="S45375"/>
</dbReference>
<dbReference type="SMR" id="P49214"/>
<dbReference type="STRING" id="4097.P49214"/>
<dbReference type="PaxDb" id="4097-P49214"/>
<dbReference type="Proteomes" id="UP000084051">
    <property type="component" value="Unplaced"/>
</dbReference>
<dbReference type="GO" id="GO:0022627">
    <property type="term" value="C:cytosolic small ribosomal subunit"/>
    <property type="evidence" value="ECO:0000318"/>
    <property type="project" value="GO_Central"/>
</dbReference>
<dbReference type="GO" id="GO:0019843">
    <property type="term" value="F:rRNA binding"/>
    <property type="evidence" value="ECO:0000318"/>
    <property type="project" value="GO_Central"/>
</dbReference>
<dbReference type="GO" id="GO:0003735">
    <property type="term" value="F:structural constituent of ribosome"/>
    <property type="evidence" value="ECO:0000318"/>
    <property type="project" value="GO_Central"/>
</dbReference>
<dbReference type="GO" id="GO:0042274">
    <property type="term" value="P:ribosomal small subunit biogenesis"/>
    <property type="evidence" value="ECO:0000318"/>
    <property type="project" value="GO_Central"/>
</dbReference>
<dbReference type="CDD" id="cd00165">
    <property type="entry name" value="S4"/>
    <property type="match status" value="1"/>
</dbReference>
<dbReference type="Gene3D" id="3.10.290.10">
    <property type="entry name" value="RNA-binding S4 domain"/>
    <property type="match status" value="1"/>
</dbReference>
<dbReference type="InterPro" id="IPR022801">
    <property type="entry name" value="Ribosomal_uS4"/>
</dbReference>
<dbReference type="InterPro" id="IPR002942">
    <property type="entry name" value="S4_RNA-bd"/>
</dbReference>
<dbReference type="InterPro" id="IPR036986">
    <property type="entry name" value="S4_RNA-bd_sf"/>
</dbReference>
<dbReference type="PANTHER" id="PTHR11831">
    <property type="entry name" value="30S 40S RIBOSOMAL PROTEIN"/>
    <property type="match status" value="1"/>
</dbReference>
<dbReference type="PANTHER" id="PTHR11831:SF44">
    <property type="entry name" value="40S RIBOSOMAL PROTEIN S9"/>
    <property type="match status" value="1"/>
</dbReference>
<dbReference type="Pfam" id="PF01479">
    <property type="entry name" value="S4"/>
    <property type="match status" value="1"/>
</dbReference>
<dbReference type="SUPFAM" id="SSF55174">
    <property type="entry name" value="Alpha-L RNA-binding motif"/>
    <property type="match status" value="1"/>
</dbReference>
<gene>
    <name type="primary">RPS9</name>
</gene>
<accession>P49214</accession>